<gene>
    <name type="primary">rps12</name>
</gene>
<keyword id="KW-0150">Chloroplast</keyword>
<keyword id="KW-0934">Plastid</keyword>
<keyword id="KW-1185">Reference proteome</keyword>
<keyword id="KW-0687">Ribonucleoprotein</keyword>
<keyword id="KW-0689">Ribosomal protein</keyword>
<keyword id="KW-0694">RNA-binding</keyword>
<keyword id="KW-0699">rRNA-binding</keyword>
<dbReference type="EMBL" id="AP005672">
    <property type="protein sequence ID" value="BAC85026.1"/>
    <property type="molecule type" value="Genomic_DNA"/>
</dbReference>
<dbReference type="RefSeq" id="NP_904164.1">
    <property type="nucleotide sequence ID" value="NC_005087.2"/>
</dbReference>
<dbReference type="SMR" id="Q6YXM6"/>
<dbReference type="FunCoup" id="Q6YXM6">
    <property type="interactions" value="2111"/>
</dbReference>
<dbReference type="STRING" id="3218.Q6YXM6"/>
<dbReference type="GeneID" id="2546797"/>
<dbReference type="KEGG" id="ppp:2546797"/>
<dbReference type="InParanoid" id="Q6YXM6"/>
<dbReference type="OrthoDB" id="414309at2759"/>
<dbReference type="Proteomes" id="UP000006727">
    <property type="component" value="Chloroplast"/>
</dbReference>
<dbReference type="GO" id="GO:0009507">
    <property type="term" value="C:chloroplast"/>
    <property type="evidence" value="ECO:0007669"/>
    <property type="project" value="UniProtKB-SubCell"/>
</dbReference>
<dbReference type="GO" id="GO:0005840">
    <property type="term" value="C:ribosome"/>
    <property type="evidence" value="ECO:0000318"/>
    <property type="project" value="GO_Central"/>
</dbReference>
<dbReference type="GO" id="GO:0015935">
    <property type="term" value="C:small ribosomal subunit"/>
    <property type="evidence" value="ECO:0007669"/>
    <property type="project" value="InterPro"/>
</dbReference>
<dbReference type="GO" id="GO:0019843">
    <property type="term" value="F:rRNA binding"/>
    <property type="evidence" value="ECO:0007669"/>
    <property type="project" value="UniProtKB-UniRule"/>
</dbReference>
<dbReference type="GO" id="GO:0003735">
    <property type="term" value="F:structural constituent of ribosome"/>
    <property type="evidence" value="ECO:0000318"/>
    <property type="project" value="GO_Central"/>
</dbReference>
<dbReference type="GO" id="GO:0006412">
    <property type="term" value="P:translation"/>
    <property type="evidence" value="ECO:0000318"/>
    <property type="project" value="GO_Central"/>
</dbReference>
<dbReference type="CDD" id="cd03368">
    <property type="entry name" value="Ribosomal_S12"/>
    <property type="match status" value="1"/>
</dbReference>
<dbReference type="FunFam" id="2.40.50.140:FF:000008">
    <property type="entry name" value="30S ribosomal protein S12, chloroplastic"/>
    <property type="match status" value="1"/>
</dbReference>
<dbReference type="Gene3D" id="2.40.50.140">
    <property type="entry name" value="Nucleic acid-binding proteins"/>
    <property type="match status" value="1"/>
</dbReference>
<dbReference type="HAMAP" id="MF_00403_B">
    <property type="entry name" value="Ribosomal_uS12_B"/>
    <property type="match status" value="1"/>
</dbReference>
<dbReference type="InterPro" id="IPR012340">
    <property type="entry name" value="NA-bd_OB-fold"/>
</dbReference>
<dbReference type="InterPro" id="IPR006032">
    <property type="entry name" value="Ribosomal_uS12"/>
</dbReference>
<dbReference type="InterPro" id="IPR005679">
    <property type="entry name" value="Ribosomal_uS12_bac"/>
</dbReference>
<dbReference type="NCBIfam" id="TIGR00981">
    <property type="entry name" value="rpsL_bact"/>
    <property type="match status" value="1"/>
</dbReference>
<dbReference type="PANTHER" id="PTHR11652">
    <property type="entry name" value="30S RIBOSOMAL PROTEIN S12 FAMILY MEMBER"/>
    <property type="match status" value="1"/>
</dbReference>
<dbReference type="Pfam" id="PF00164">
    <property type="entry name" value="Ribosom_S12_S23"/>
    <property type="match status" value="1"/>
</dbReference>
<dbReference type="PIRSF" id="PIRSF002133">
    <property type="entry name" value="Ribosomal_S12/S23"/>
    <property type="match status" value="1"/>
</dbReference>
<dbReference type="PRINTS" id="PR01034">
    <property type="entry name" value="RIBOSOMALS12"/>
</dbReference>
<dbReference type="SUPFAM" id="SSF50249">
    <property type="entry name" value="Nucleic acid-binding proteins"/>
    <property type="match status" value="1"/>
</dbReference>
<dbReference type="PROSITE" id="PS00055">
    <property type="entry name" value="RIBOSOMAL_S12"/>
    <property type="match status" value="1"/>
</dbReference>
<comment type="function">
    <text evidence="1">With S4 and S5 plays an important role in translational accuracy. Located at the interface of the 30S and 50S subunits (By similarity).</text>
</comment>
<comment type="subunit">
    <text evidence="1">Part of the 30S ribosomal subunit.</text>
</comment>
<comment type="subcellular location">
    <subcellularLocation>
        <location>Plastid</location>
        <location>Chloroplast</location>
    </subcellularLocation>
</comment>
<comment type="similarity">
    <text evidence="2">Belongs to the universal ribosomal protein uS12 family.</text>
</comment>
<accession>Q6YXM6</accession>
<organism>
    <name type="scientific">Physcomitrium patens</name>
    <name type="common">Spreading-leaved earth moss</name>
    <name type="synonym">Physcomitrella patens</name>
    <dbReference type="NCBI Taxonomy" id="3218"/>
    <lineage>
        <taxon>Eukaryota</taxon>
        <taxon>Viridiplantae</taxon>
        <taxon>Streptophyta</taxon>
        <taxon>Embryophyta</taxon>
        <taxon>Bryophyta</taxon>
        <taxon>Bryophytina</taxon>
        <taxon>Bryopsida</taxon>
        <taxon>Funariidae</taxon>
        <taxon>Funariales</taxon>
        <taxon>Funariaceae</taxon>
        <taxon>Physcomitrium</taxon>
    </lineage>
</organism>
<reference key="1">
    <citation type="journal article" date="2003" name="Nucleic Acids Res.">
        <title>Complete chloroplast DNA sequence of the moss Physcomitrella patens: evidence for the loss and relocation of rpoA from the chloroplast to the nucleus.</title>
        <authorList>
            <person name="Sugiura C."/>
            <person name="Kobayashi Y."/>
            <person name="Setsuyuki A."/>
            <person name="Sugita C."/>
            <person name="Sugita M."/>
        </authorList>
    </citation>
    <scope>NUCLEOTIDE SEQUENCE [LARGE SCALE GENOMIC DNA]</scope>
    <source>
        <strain>cv. Gransden 2004</strain>
    </source>
</reference>
<sequence>MPTIQQLIRNRRQPIENRTKSPALRGCPQRRGVCTRVYTVTPKKPNSALRKVARVRLTSGFEITAYIPGIGHNLQEHSVVLVRGGRVKDLPGVRYHIVRGTLDAVGVKDRQQGRSKYGVKKPK</sequence>
<evidence type="ECO:0000250" key="1"/>
<evidence type="ECO:0000305" key="2"/>
<geneLocation type="chloroplast"/>
<protein>
    <recommendedName>
        <fullName evidence="2">Small ribosomal subunit protein uS12c</fullName>
    </recommendedName>
    <alternativeName>
        <fullName>30S ribosomal protein S12, chloroplastic</fullName>
    </alternativeName>
</protein>
<name>RR12_PHYPA</name>
<proteinExistence type="inferred from homology"/>
<feature type="chain" id="PRO_0000146417" description="Small ribosomal subunit protein uS12c">
    <location>
        <begin position="1"/>
        <end position="123"/>
    </location>
</feature>